<feature type="chain" id="PRO_0000114970" description="Quinic acid utilization activator">
    <location>
        <begin position="1"/>
        <end position="825"/>
    </location>
</feature>
<feature type="DNA-binding region" description="Zn(2)-C6 fungal-type" evidence="1">
    <location>
        <begin position="49"/>
        <end position="76"/>
    </location>
</feature>
<feature type="region of interest" description="Disordered" evidence="2">
    <location>
        <begin position="1"/>
        <end position="45"/>
    </location>
</feature>
<feature type="region of interest" description="Disordered" evidence="2">
    <location>
        <begin position="160"/>
        <end position="186"/>
    </location>
</feature>
<feature type="region of interest" description="Disordered" evidence="2">
    <location>
        <begin position="204"/>
        <end position="224"/>
    </location>
</feature>
<feature type="region of interest" description="Disordered" evidence="2">
    <location>
        <begin position="658"/>
        <end position="683"/>
    </location>
</feature>
<feature type="compositionally biased region" description="Polar residues" evidence="2">
    <location>
        <begin position="1"/>
        <end position="12"/>
    </location>
</feature>
<feature type="compositionally biased region" description="Basic and acidic residues" evidence="2">
    <location>
        <begin position="18"/>
        <end position="28"/>
    </location>
</feature>
<feature type="compositionally biased region" description="Basic and acidic residues" evidence="2">
    <location>
        <begin position="165"/>
        <end position="174"/>
    </location>
</feature>
<feature type="compositionally biased region" description="Polar residues" evidence="2">
    <location>
        <begin position="658"/>
        <end position="672"/>
    </location>
</feature>
<feature type="sequence conflict" description="In Ref. 1; CAA29594." evidence="3" ref="1">
    <original>L</original>
    <variation>V</variation>
    <location>
        <position position="444"/>
    </location>
</feature>
<feature type="sequence conflict" description="In Ref. 1; CAA29594." evidence="3" ref="1">
    <original>A</original>
    <variation>P</variation>
    <location>
        <position position="631"/>
    </location>
</feature>
<feature type="sequence conflict" description="In Ref. 1; CAA29594." evidence="3" ref="1">
    <original>E</original>
    <variation>Q</variation>
    <location>
        <position position="796"/>
    </location>
</feature>
<keyword id="KW-0010">Activator</keyword>
<keyword id="KW-0238">DNA-binding</keyword>
<keyword id="KW-0479">Metal-binding</keyword>
<keyword id="KW-0539">Nucleus</keyword>
<keyword id="KW-0672">Quinate metabolism</keyword>
<keyword id="KW-1185">Reference proteome</keyword>
<keyword id="KW-0804">Transcription</keyword>
<keyword id="KW-0805">Transcription regulation</keyword>
<keyword id="KW-0862">Zinc</keyword>
<name>QUTA_EMENI</name>
<proteinExistence type="predicted"/>
<sequence length="825" mass="90398">MSSDTRQTSGGNARSKRRLTDAVDEDGRPTATAEDPTSNPKRQRVSRACDSCRSKKDKCDGAQPICSTCASLSRPCTYRANPKKRGLPTGYIRTLELLWGLVFNKIQGSEEVVRTLLRAANIPSHLATMGKESEGSDTLLSSWKNSIVLKEIERLLTFLEQPEGDQERSARGEIDSPADAEESSVLSPETLEWQLPDSIAVASQSPLASGPSPVRLPRPSTTRLVRDSGTQTIPLGEIEDLTTNGSSHDRPVIASNSAREEHRLPPNPWPLLDIYFSYTQCWFPILEKHDILRTAFRQGDDDQYNSPSAAGDNAALWAVLALASIQQTSISTTRQLSDLPEDRPDPDQLYAKARSLIPTESGTYQLGHIQALLILSLIKLGQQDCAAAWMLVGQAVRSAQSLGLNDPSDATGVEKTAGRSKHVFLGCFVLETLVAAKLGLLPSLRKTDLTKVGLINEDGLEEWHPWEDQTGLRPIESSRSFQRGPLHALSTFNRLLSLMCILNELCCVRQTPANSMSYLGTLERQLQLWVSALPTSYRIDLQTVSTKPASPHIFGLEMMYEAVATAISLQLAVQKNERNGLRRASEGSKRLVSLLQAYMETYSLSATCPTFGIALTLGLPLPCMKKTAPWAFEASHGINHKLQSFSAHLATVWIHNTGSQRRPRHATQQGTHPRSPMAISLPGNNMRLTNLIEESRTGNLSTTDSYLSPTWMRTSNDENAVLSLPTPASSLNIASGVETNPTSQQITHQHRSSVVGKPNSALIMSDLTTPFPASGHHYQQTYDDASLHFNSLADIESTSSAQRPRIAPDLDALFDELASLDGTDR</sequence>
<reference key="1">
    <citation type="journal article" date="1987" name="Nucleic Acids Res.">
        <title>Isolation and characterization of the positively acting regulatory gene QUTA from Aspergillus nidulans.</title>
        <authorList>
            <person name="Beri R.K."/>
            <person name="Whittington H."/>
            <person name="Roberts C.F."/>
            <person name="Hawkins A.R."/>
        </authorList>
    </citation>
    <scope>NUCLEOTIDE SEQUENCE [GENOMIC DNA]</scope>
</reference>
<reference key="2">
    <citation type="journal article" date="2005" name="Nature">
        <title>Sequencing of Aspergillus nidulans and comparative analysis with A. fumigatus and A. oryzae.</title>
        <authorList>
            <person name="Galagan J.E."/>
            <person name="Calvo S.E."/>
            <person name="Cuomo C."/>
            <person name="Ma L.-J."/>
            <person name="Wortman J.R."/>
            <person name="Batzoglou S."/>
            <person name="Lee S.-I."/>
            <person name="Bastuerkmen M."/>
            <person name="Spevak C.C."/>
            <person name="Clutterbuck J."/>
            <person name="Kapitonov V."/>
            <person name="Jurka J."/>
            <person name="Scazzocchio C."/>
            <person name="Farman M.L."/>
            <person name="Butler J."/>
            <person name="Purcell S."/>
            <person name="Harris S."/>
            <person name="Braus G.H."/>
            <person name="Draht O."/>
            <person name="Busch S."/>
            <person name="D'Enfert C."/>
            <person name="Bouchier C."/>
            <person name="Goldman G.H."/>
            <person name="Bell-Pedersen D."/>
            <person name="Griffiths-Jones S."/>
            <person name="Doonan J.H."/>
            <person name="Yu J."/>
            <person name="Vienken K."/>
            <person name="Pain A."/>
            <person name="Freitag M."/>
            <person name="Selker E.U."/>
            <person name="Archer D.B."/>
            <person name="Penalva M.A."/>
            <person name="Oakley B.R."/>
            <person name="Momany M."/>
            <person name="Tanaka T."/>
            <person name="Kumagai T."/>
            <person name="Asai K."/>
            <person name="Machida M."/>
            <person name="Nierman W.C."/>
            <person name="Denning D.W."/>
            <person name="Caddick M.X."/>
            <person name="Hynes M."/>
            <person name="Paoletti M."/>
            <person name="Fischer R."/>
            <person name="Miller B.L."/>
            <person name="Dyer P.S."/>
            <person name="Sachs M.S."/>
            <person name="Osmani S.A."/>
            <person name="Birren B.W."/>
        </authorList>
    </citation>
    <scope>NUCLEOTIDE SEQUENCE [LARGE SCALE GENOMIC DNA]</scope>
    <source>
        <strain>FGSC A4 / ATCC 38163 / CBS 112.46 / NRRL 194 / M139</strain>
    </source>
</reference>
<reference key="3">
    <citation type="journal article" date="2009" name="Fungal Genet. Biol.">
        <title>The 2008 update of the Aspergillus nidulans genome annotation: a community effort.</title>
        <authorList>
            <person name="Wortman J.R."/>
            <person name="Gilsenan J.M."/>
            <person name="Joardar V."/>
            <person name="Deegan J."/>
            <person name="Clutterbuck J."/>
            <person name="Andersen M.R."/>
            <person name="Archer D."/>
            <person name="Bencina M."/>
            <person name="Braus G."/>
            <person name="Coutinho P."/>
            <person name="von Dohren H."/>
            <person name="Doonan J."/>
            <person name="Driessen A.J."/>
            <person name="Durek P."/>
            <person name="Espeso E."/>
            <person name="Fekete E."/>
            <person name="Flipphi M."/>
            <person name="Estrada C.G."/>
            <person name="Geysens S."/>
            <person name="Goldman G."/>
            <person name="de Groot P.W."/>
            <person name="Hansen K."/>
            <person name="Harris S.D."/>
            <person name="Heinekamp T."/>
            <person name="Helmstaedt K."/>
            <person name="Henrissat B."/>
            <person name="Hofmann G."/>
            <person name="Homan T."/>
            <person name="Horio T."/>
            <person name="Horiuchi H."/>
            <person name="James S."/>
            <person name="Jones M."/>
            <person name="Karaffa L."/>
            <person name="Karanyi Z."/>
            <person name="Kato M."/>
            <person name="Keller N."/>
            <person name="Kelly D.E."/>
            <person name="Kiel J.A."/>
            <person name="Kim J.M."/>
            <person name="van der Klei I.J."/>
            <person name="Klis F.M."/>
            <person name="Kovalchuk A."/>
            <person name="Krasevec N."/>
            <person name="Kubicek C.P."/>
            <person name="Liu B."/>
            <person name="Maccabe A."/>
            <person name="Meyer V."/>
            <person name="Mirabito P."/>
            <person name="Miskei M."/>
            <person name="Mos M."/>
            <person name="Mullins J."/>
            <person name="Nelson D.R."/>
            <person name="Nielsen J."/>
            <person name="Oakley B.R."/>
            <person name="Osmani S.A."/>
            <person name="Pakula T."/>
            <person name="Paszewski A."/>
            <person name="Paulsen I."/>
            <person name="Pilsyk S."/>
            <person name="Pocsi I."/>
            <person name="Punt P.J."/>
            <person name="Ram A.F."/>
            <person name="Ren Q."/>
            <person name="Robellet X."/>
            <person name="Robson G."/>
            <person name="Seiboth B."/>
            <person name="van Solingen P."/>
            <person name="Specht T."/>
            <person name="Sun J."/>
            <person name="Taheri-Talesh N."/>
            <person name="Takeshita N."/>
            <person name="Ussery D."/>
            <person name="vanKuyk P.A."/>
            <person name="Visser H."/>
            <person name="van de Vondervoort P.J."/>
            <person name="de Vries R.P."/>
            <person name="Walton J."/>
            <person name="Xiang X."/>
            <person name="Xiong Y."/>
            <person name="Zeng A.P."/>
            <person name="Brandt B.W."/>
            <person name="Cornell M.J."/>
            <person name="van den Hondel C.A."/>
            <person name="Visser J."/>
            <person name="Oliver S.G."/>
            <person name="Turner G."/>
        </authorList>
    </citation>
    <scope>GENOME REANNOTATION</scope>
    <source>
        <strain>FGSC A4 / ATCC 38163 / CBS 112.46 / NRRL 194 / M139</strain>
    </source>
</reference>
<evidence type="ECO:0000255" key="1">
    <source>
        <dbReference type="PROSITE-ProRule" id="PRU00227"/>
    </source>
</evidence>
<evidence type="ECO:0000256" key="2">
    <source>
        <dbReference type="SAM" id="MobiDB-lite"/>
    </source>
</evidence>
<evidence type="ECO:0000305" key="3"/>
<dbReference type="EMBL" id="X06252">
    <property type="protein sequence ID" value="CAA29594.1"/>
    <property type="molecule type" value="Genomic_DNA"/>
</dbReference>
<dbReference type="EMBL" id="AACD01000016">
    <property type="protein sequence ID" value="EAA66252.1"/>
    <property type="molecule type" value="Genomic_DNA"/>
</dbReference>
<dbReference type="EMBL" id="BN001308">
    <property type="protein sequence ID" value="CBF88076.1"/>
    <property type="molecule type" value="Genomic_DNA"/>
</dbReference>
<dbReference type="PIR" id="A26983">
    <property type="entry name" value="A26983"/>
</dbReference>
<dbReference type="RefSeq" id="XP_658738.1">
    <property type="nucleotide sequence ID" value="XM_653646.1"/>
</dbReference>
<dbReference type="SMR" id="P10563"/>
<dbReference type="STRING" id="227321.P10563"/>
<dbReference type="EnsemblFungi" id="CBF88076">
    <property type="protein sequence ID" value="CBF88076"/>
    <property type="gene ID" value="ANIA_01134"/>
</dbReference>
<dbReference type="KEGG" id="ani:ANIA_01134"/>
<dbReference type="VEuPathDB" id="FungiDB:AN1134"/>
<dbReference type="eggNOG" id="ENOG502S3FG">
    <property type="taxonomic scope" value="Eukaryota"/>
</dbReference>
<dbReference type="HOGENOM" id="CLU_007607_1_1_1"/>
<dbReference type="InParanoid" id="P10563"/>
<dbReference type="OMA" id="CRPCTYK"/>
<dbReference type="OrthoDB" id="3364175at2759"/>
<dbReference type="Proteomes" id="UP000000560">
    <property type="component" value="Chromosome VIII"/>
</dbReference>
<dbReference type="GO" id="GO:0005634">
    <property type="term" value="C:nucleus"/>
    <property type="evidence" value="ECO:0007669"/>
    <property type="project" value="UniProtKB-SubCell"/>
</dbReference>
<dbReference type="GO" id="GO:0003677">
    <property type="term" value="F:DNA binding"/>
    <property type="evidence" value="ECO:0007669"/>
    <property type="project" value="UniProtKB-KW"/>
</dbReference>
<dbReference type="GO" id="GO:0003700">
    <property type="term" value="F:DNA-binding transcription factor activity"/>
    <property type="evidence" value="ECO:0000315"/>
    <property type="project" value="AspGD"/>
</dbReference>
<dbReference type="GO" id="GO:0000981">
    <property type="term" value="F:DNA-binding transcription factor activity, RNA polymerase II-specific"/>
    <property type="evidence" value="ECO:0007669"/>
    <property type="project" value="InterPro"/>
</dbReference>
<dbReference type="GO" id="GO:0008270">
    <property type="term" value="F:zinc ion binding"/>
    <property type="evidence" value="ECO:0007669"/>
    <property type="project" value="InterPro"/>
</dbReference>
<dbReference type="GO" id="GO:0006351">
    <property type="term" value="P:DNA-templated transcription"/>
    <property type="evidence" value="ECO:0007669"/>
    <property type="project" value="InterPro"/>
</dbReference>
<dbReference type="GO" id="GO:0045944">
    <property type="term" value="P:positive regulation of transcription by RNA polymerase II"/>
    <property type="evidence" value="ECO:0000315"/>
    <property type="project" value="AspGD"/>
</dbReference>
<dbReference type="GO" id="GO:0019631">
    <property type="term" value="P:quinate catabolic process"/>
    <property type="evidence" value="ECO:0000315"/>
    <property type="project" value="AspGD"/>
</dbReference>
<dbReference type="CDD" id="cd12148">
    <property type="entry name" value="fungal_TF_MHR"/>
    <property type="match status" value="1"/>
</dbReference>
<dbReference type="CDD" id="cd00067">
    <property type="entry name" value="GAL4"/>
    <property type="match status" value="1"/>
</dbReference>
<dbReference type="FunFam" id="4.10.240.10:FF:000005">
    <property type="entry name" value="Quinic acid utilization activator"/>
    <property type="match status" value="1"/>
</dbReference>
<dbReference type="Gene3D" id="4.10.240.10">
    <property type="entry name" value="Zn(2)-C6 fungal-type DNA-binding domain"/>
    <property type="match status" value="1"/>
</dbReference>
<dbReference type="InterPro" id="IPR052783">
    <property type="entry name" value="Metabolic/Drug-Res_Regulator"/>
</dbReference>
<dbReference type="InterPro" id="IPR007219">
    <property type="entry name" value="Transcription_factor_dom_fun"/>
</dbReference>
<dbReference type="InterPro" id="IPR036864">
    <property type="entry name" value="Zn2-C6_fun-type_DNA-bd_sf"/>
</dbReference>
<dbReference type="InterPro" id="IPR001138">
    <property type="entry name" value="Zn2Cys6_DnaBD"/>
</dbReference>
<dbReference type="PANTHER" id="PTHR47655">
    <property type="entry name" value="QUINIC ACID UTILIZATION ACTIVATOR"/>
    <property type="match status" value="1"/>
</dbReference>
<dbReference type="PANTHER" id="PTHR47655:SF2">
    <property type="entry name" value="QUINIC ACID UTILIZATION ACTIVATOR"/>
    <property type="match status" value="1"/>
</dbReference>
<dbReference type="Pfam" id="PF04082">
    <property type="entry name" value="Fungal_trans"/>
    <property type="match status" value="1"/>
</dbReference>
<dbReference type="Pfam" id="PF00172">
    <property type="entry name" value="Zn_clus"/>
    <property type="match status" value="1"/>
</dbReference>
<dbReference type="SMART" id="SM00906">
    <property type="entry name" value="Fungal_trans"/>
    <property type="match status" value="1"/>
</dbReference>
<dbReference type="SMART" id="SM00066">
    <property type="entry name" value="GAL4"/>
    <property type="match status" value="1"/>
</dbReference>
<dbReference type="SUPFAM" id="SSF57701">
    <property type="entry name" value="Zn2/Cys6 DNA-binding domain"/>
    <property type="match status" value="1"/>
</dbReference>
<dbReference type="PROSITE" id="PS00463">
    <property type="entry name" value="ZN2_CY6_FUNGAL_1"/>
    <property type="match status" value="1"/>
</dbReference>
<dbReference type="PROSITE" id="PS50048">
    <property type="entry name" value="ZN2_CY6_FUNGAL_2"/>
    <property type="match status" value="1"/>
</dbReference>
<accession>P10563</accession>
<accession>C8VTB3</accession>
<accession>Q5BE96</accession>
<gene>
    <name type="primary">qutA</name>
    <name type="ORF">AN1134</name>
</gene>
<comment type="function">
    <text>Transcription activation of genes for enzymes and proteins of quinate metabolism by binding to a 16 base-pair sequence (consensus 5'-GGATAANNNNTTATCC-3') in front of each qut gene.</text>
</comment>
<comment type="subcellular location">
    <subcellularLocation>
        <location>Nucleus</location>
    </subcellularLocation>
</comment>
<protein>
    <recommendedName>
        <fullName>Quinic acid utilization activator</fullName>
    </recommendedName>
</protein>
<organism>
    <name type="scientific">Emericella nidulans (strain FGSC A4 / ATCC 38163 / CBS 112.46 / NRRL 194 / M139)</name>
    <name type="common">Aspergillus nidulans</name>
    <dbReference type="NCBI Taxonomy" id="227321"/>
    <lineage>
        <taxon>Eukaryota</taxon>
        <taxon>Fungi</taxon>
        <taxon>Dikarya</taxon>
        <taxon>Ascomycota</taxon>
        <taxon>Pezizomycotina</taxon>
        <taxon>Eurotiomycetes</taxon>
        <taxon>Eurotiomycetidae</taxon>
        <taxon>Eurotiales</taxon>
        <taxon>Aspergillaceae</taxon>
        <taxon>Aspergillus</taxon>
        <taxon>Aspergillus subgen. Nidulantes</taxon>
    </lineage>
</organism>